<reference key="1">
    <citation type="submission" date="2007-02" db="EMBL/GenBank/DDBJ databases">
        <title>Complete sequence of chromosome of Shewanella baltica OS155.</title>
        <authorList>
            <consortium name="US DOE Joint Genome Institute"/>
            <person name="Copeland A."/>
            <person name="Lucas S."/>
            <person name="Lapidus A."/>
            <person name="Barry K."/>
            <person name="Detter J.C."/>
            <person name="Glavina del Rio T."/>
            <person name="Hammon N."/>
            <person name="Israni S."/>
            <person name="Dalin E."/>
            <person name="Tice H."/>
            <person name="Pitluck S."/>
            <person name="Sims D.R."/>
            <person name="Brettin T."/>
            <person name="Bruce D."/>
            <person name="Han C."/>
            <person name="Tapia R."/>
            <person name="Brainard J."/>
            <person name="Schmutz J."/>
            <person name="Larimer F."/>
            <person name="Land M."/>
            <person name="Hauser L."/>
            <person name="Kyrpides N."/>
            <person name="Mikhailova N."/>
            <person name="Brettar I."/>
            <person name="Klappenbach J."/>
            <person name="Konstantinidis K."/>
            <person name="Rodrigues J."/>
            <person name="Tiedje J."/>
            <person name="Richardson P."/>
        </authorList>
    </citation>
    <scope>NUCLEOTIDE SEQUENCE [LARGE SCALE GENOMIC DNA]</scope>
    <source>
        <strain>OS155 / ATCC BAA-1091</strain>
    </source>
</reference>
<proteinExistence type="inferred from homology"/>
<gene>
    <name evidence="1" type="primary">ribB</name>
    <name type="ordered locus">Sbal_4219</name>
</gene>
<name>RIBB_SHEB5</name>
<keyword id="KW-0456">Lyase</keyword>
<keyword id="KW-0460">Magnesium</keyword>
<keyword id="KW-0464">Manganese</keyword>
<keyword id="KW-0479">Metal-binding</keyword>
<keyword id="KW-1185">Reference proteome</keyword>
<keyword id="KW-0686">Riboflavin biosynthesis</keyword>
<sequence length="217" mass="22956">MNQSLLAPFGTAIERVEAGLNALRQGQGVLVVDDEDRENEGDLIFAAETLTNAQMAMLIRECSGIVCLCLPDEKIKALELPAMVEHNSSQYGTAFTVSIEATVGVTTGVSAADRVTTIKAAIADNAKPSDLARPGHVYPLRAQPGGVLTRRGHTEGTIDLVQLAGLKPAGVLCEVTNPDGTMARLPEIIAFGALHNMPVLTIEDIVVYRKSLLAKVG</sequence>
<accession>A3DAC1</accession>
<protein>
    <recommendedName>
        <fullName evidence="1">3,4-dihydroxy-2-butanone 4-phosphate synthase</fullName>
        <shortName evidence="1">DHBP synthase</shortName>
        <ecNumber evidence="1">4.1.99.12</ecNumber>
    </recommendedName>
</protein>
<comment type="function">
    <text evidence="1">Catalyzes the conversion of D-ribulose 5-phosphate to formate and 3,4-dihydroxy-2-butanone 4-phosphate.</text>
</comment>
<comment type="catalytic activity">
    <reaction evidence="1">
        <text>D-ribulose 5-phosphate = (2S)-2-hydroxy-3-oxobutyl phosphate + formate + H(+)</text>
        <dbReference type="Rhea" id="RHEA:18457"/>
        <dbReference type="ChEBI" id="CHEBI:15378"/>
        <dbReference type="ChEBI" id="CHEBI:15740"/>
        <dbReference type="ChEBI" id="CHEBI:58121"/>
        <dbReference type="ChEBI" id="CHEBI:58830"/>
        <dbReference type="EC" id="4.1.99.12"/>
    </reaction>
</comment>
<comment type="cofactor">
    <cofactor evidence="1">
        <name>Mg(2+)</name>
        <dbReference type="ChEBI" id="CHEBI:18420"/>
    </cofactor>
    <cofactor evidence="1">
        <name>Mn(2+)</name>
        <dbReference type="ChEBI" id="CHEBI:29035"/>
    </cofactor>
    <text evidence="1">Binds 2 divalent metal cations per subunit. Magnesium or manganese.</text>
</comment>
<comment type="pathway">
    <text evidence="1">Cofactor biosynthesis; riboflavin biosynthesis; 2-hydroxy-3-oxobutyl phosphate from D-ribulose 5-phosphate: step 1/1.</text>
</comment>
<comment type="subunit">
    <text evidence="1">Homodimer.</text>
</comment>
<comment type="similarity">
    <text evidence="1">Belongs to the DHBP synthase family.</text>
</comment>
<dbReference type="EC" id="4.1.99.12" evidence="1"/>
<dbReference type="EMBL" id="CP000563">
    <property type="protein sequence ID" value="ABN63684.1"/>
    <property type="molecule type" value="Genomic_DNA"/>
</dbReference>
<dbReference type="RefSeq" id="WP_011848186.1">
    <property type="nucleotide sequence ID" value="NC_009052.1"/>
</dbReference>
<dbReference type="SMR" id="A3DAC1"/>
<dbReference type="STRING" id="325240.Sbal_4219"/>
<dbReference type="KEGG" id="sbl:Sbal_4219"/>
<dbReference type="HOGENOM" id="CLU_020273_3_0_6"/>
<dbReference type="OrthoDB" id="9793111at2"/>
<dbReference type="UniPathway" id="UPA00275">
    <property type="reaction ID" value="UER00399"/>
</dbReference>
<dbReference type="Proteomes" id="UP000001557">
    <property type="component" value="Chromosome"/>
</dbReference>
<dbReference type="GO" id="GO:0005829">
    <property type="term" value="C:cytosol"/>
    <property type="evidence" value="ECO:0007669"/>
    <property type="project" value="TreeGrafter"/>
</dbReference>
<dbReference type="GO" id="GO:0008686">
    <property type="term" value="F:3,4-dihydroxy-2-butanone-4-phosphate synthase activity"/>
    <property type="evidence" value="ECO:0007669"/>
    <property type="project" value="UniProtKB-UniRule"/>
</dbReference>
<dbReference type="GO" id="GO:0000287">
    <property type="term" value="F:magnesium ion binding"/>
    <property type="evidence" value="ECO:0007669"/>
    <property type="project" value="UniProtKB-UniRule"/>
</dbReference>
<dbReference type="GO" id="GO:0030145">
    <property type="term" value="F:manganese ion binding"/>
    <property type="evidence" value="ECO:0007669"/>
    <property type="project" value="UniProtKB-UniRule"/>
</dbReference>
<dbReference type="GO" id="GO:0009231">
    <property type="term" value="P:riboflavin biosynthetic process"/>
    <property type="evidence" value="ECO:0007669"/>
    <property type="project" value="UniProtKB-UniRule"/>
</dbReference>
<dbReference type="FunFam" id="3.90.870.10:FF:000002">
    <property type="entry name" value="3,4-dihydroxy-2-butanone 4-phosphate synthase"/>
    <property type="match status" value="1"/>
</dbReference>
<dbReference type="Gene3D" id="3.90.870.10">
    <property type="entry name" value="DHBP synthase"/>
    <property type="match status" value="1"/>
</dbReference>
<dbReference type="HAMAP" id="MF_00180">
    <property type="entry name" value="RibB"/>
    <property type="match status" value="1"/>
</dbReference>
<dbReference type="InterPro" id="IPR017945">
    <property type="entry name" value="DHBP_synth_RibB-like_a/b_dom"/>
</dbReference>
<dbReference type="InterPro" id="IPR000422">
    <property type="entry name" value="DHBP_synthase_RibB"/>
</dbReference>
<dbReference type="NCBIfam" id="TIGR00506">
    <property type="entry name" value="ribB"/>
    <property type="match status" value="1"/>
</dbReference>
<dbReference type="PANTHER" id="PTHR21327:SF38">
    <property type="entry name" value="3,4-DIHYDROXY-2-BUTANONE 4-PHOSPHATE SYNTHASE"/>
    <property type="match status" value="1"/>
</dbReference>
<dbReference type="PANTHER" id="PTHR21327">
    <property type="entry name" value="GTP CYCLOHYDROLASE II-RELATED"/>
    <property type="match status" value="1"/>
</dbReference>
<dbReference type="Pfam" id="PF00926">
    <property type="entry name" value="DHBP_synthase"/>
    <property type="match status" value="1"/>
</dbReference>
<dbReference type="SUPFAM" id="SSF55821">
    <property type="entry name" value="YrdC/RibB"/>
    <property type="match status" value="1"/>
</dbReference>
<evidence type="ECO:0000255" key="1">
    <source>
        <dbReference type="HAMAP-Rule" id="MF_00180"/>
    </source>
</evidence>
<organism>
    <name type="scientific">Shewanella baltica (strain OS155 / ATCC BAA-1091)</name>
    <dbReference type="NCBI Taxonomy" id="325240"/>
    <lineage>
        <taxon>Bacteria</taxon>
        <taxon>Pseudomonadati</taxon>
        <taxon>Pseudomonadota</taxon>
        <taxon>Gammaproteobacteria</taxon>
        <taxon>Alteromonadales</taxon>
        <taxon>Shewanellaceae</taxon>
        <taxon>Shewanella</taxon>
    </lineage>
</organism>
<feature type="chain" id="PRO_1000040625" description="3,4-dihydroxy-2-butanone 4-phosphate synthase">
    <location>
        <begin position="1"/>
        <end position="217"/>
    </location>
</feature>
<feature type="binding site" evidence="1">
    <location>
        <begin position="37"/>
        <end position="38"/>
    </location>
    <ligand>
        <name>D-ribulose 5-phosphate</name>
        <dbReference type="ChEBI" id="CHEBI:58121"/>
    </ligand>
</feature>
<feature type="binding site" evidence="1">
    <location>
        <position position="38"/>
    </location>
    <ligand>
        <name>Mg(2+)</name>
        <dbReference type="ChEBI" id="CHEBI:18420"/>
        <label>1</label>
    </ligand>
</feature>
<feature type="binding site" evidence="1">
    <location>
        <position position="38"/>
    </location>
    <ligand>
        <name>Mg(2+)</name>
        <dbReference type="ChEBI" id="CHEBI:18420"/>
        <label>2</label>
    </ligand>
</feature>
<feature type="binding site" evidence="1">
    <location>
        <position position="42"/>
    </location>
    <ligand>
        <name>D-ribulose 5-phosphate</name>
        <dbReference type="ChEBI" id="CHEBI:58121"/>
    </ligand>
</feature>
<feature type="binding site" evidence="1">
    <location>
        <begin position="150"/>
        <end position="154"/>
    </location>
    <ligand>
        <name>D-ribulose 5-phosphate</name>
        <dbReference type="ChEBI" id="CHEBI:58121"/>
    </ligand>
</feature>
<feature type="binding site" evidence="1">
    <location>
        <position position="153"/>
    </location>
    <ligand>
        <name>Mg(2+)</name>
        <dbReference type="ChEBI" id="CHEBI:18420"/>
        <label>2</label>
    </ligand>
</feature>
<feature type="binding site" evidence="1">
    <location>
        <position position="174"/>
    </location>
    <ligand>
        <name>D-ribulose 5-phosphate</name>
        <dbReference type="ChEBI" id="CHEBI:58121"/>
    </ligand>
</feature>
<feature type="site" description="Essential for catalytic activity" evidence="1">
    <location>
        <position position="136"/>
    </location>
</feature>
<feature type="site" description="Essential for catalytic activity" evidence="1">
    <location>
        <position position="174"/>
    </location>
</feature>